<protein>
    <recommendedName>
        <fullName evidence="1">Lon protease</fullName>
        <ecNumber evidence="1">3.4.21.53</ecNumber>
    </recommendedName>
    <alternativeName>
        <fullName evidence="1">ATP-dependent protease La</fullName>
    </alternativeName>
</protein>
<proteinExistence type="inferred from homology"/>
<sequence length="783" mass="88818">MDQEMVTKETEKYIELPLLASRGVVVFPHMVIPLLVGREKSIEALEKAMVKDKEIIILSQKDEKIEDPDPEDLYTIGTIAEVKQLVKLPNGMLKVVVEGIKRARIIDFIEIDEYFEVRAEILDQTVPEVDLEMKALMKAVLNKFQEYIKYNRNLPSETIMTVTNIEEPARFSDTIASHLELKFRQEQDLLEAISIKERLNKLLEIIKDEIEILKVEQKIQKKVRKQVEKTQKEYYLREQLKAIKEELDEDEEDDEIEEYRNKAEELDLPEKIREKVDKEIEKLKKTPSMSPEATVIRNYLDCVLDLPWNKVREEKIDLDEAKNVLDSEHYGLEDVKERILEYLAVRKLAPQKKSPILCLIGAPGVGKTSLGRSIARALGRDFVRLSLGGVRDEAEIRGHRRTYIGSRPGRIINAMREAGSKNPVFLLDEVDKMSSDFRGDPAAALLEVLDPEQNNEFTDHYLELPFDLSKVLFVTTANVAYPIPAPLLDRMEVIELPGYTEDEKVEIALRHLIPRILNEHGLTEDEIHFSSNSIYRIIREYTREAGVRNLERKLAAITRKVSKEIVEGRGRQARVTTQSIEKYLGVPKFKYEKAQKKDRVGVATGMAYTQTGGDILDIEVAVVPGKGKLTLTGSLGDVMKESARAALSYIRSKQEELGLSDNFHEEYDLHVHVPKGATPKDGPSAGITIASAIASALTGQPVKGKYAMTGEVTLRGRVLPVGGIKTKIMAARRAGLKDIIMPEENKKDFEEIPVKIKKDIRVNFVNHMDQVLDLILGGDEDEN</sequence>
<keyword id="KW-0067">ATP-binding</keyword>
<keyword id="KW-0963">Cytoplasm</keyword>
<keyword id="KW-0378">Hydrolase</keyword>
<keyword id="KW-0547">Nucleotide-binding</keyword>
<keyword id="KW-0645">Protease</keyword>
<keyword id="KW-1185">Reference proteome</keyword>
<keyword id="KW-0720">Serine protease</keyword>
<keyword id="KW-0346">Stress response</keyword>
<feature type="chain" id="PRO_0000396572" description="Lon protease">
    <location>
        <begin position="1"/>
        <end position="783"/>
    </location>
</feature>
<feature type="domain" description="Lon N-terminal" evidence="3">
    <location>
        <begin position="16"/>
        <end position="210"/>
    </location>
</feature>
<feature type="domain" description="Lon proteolytic" evidence="2">
    <location>
        <begin position="597"/>
        <end position="778"/>
    </location>
</feature>
<feature type="active site" evidence="1">
    <location>
        <position position="684"/>
    </location>
</feature>
<feature type="active site" evidence="1">
    <location>
        <position position="727"/>
    </location>
</feature>
<feature type="binding site" evidence="1">
    <location>
        <begin position="361"/>
        <end position="368"/>
    </location>
    <ligand>
        <name>ATP</name>
        <dbReference type="ChEBI" id="CHEBI:30616"/>
    </ligand>
</feature>
<name>LON_HALOH</name>
<reference key="1">
    <citation type="journal article" date="2009" name="PLoS ONE">
        <title>Genome analysis of the anaerobic thermohalophilic bacterium Halothermothrix orenii.</title>
        <authorList>
            <person name="Mavromatis K."/>
            <person name="Ivanova N."/>
            <person name="Anderson I."/>
            <person name="Lykidis A."/>
            <person name="Hooper S.D."/>
            <person name="Sun H."/>
            <person name="Kunin V."/>
            <person name="Lapidus A."/>
            <person name="Hugenholtz P."/>
            <person name="Patel B."/>
            <person name="Kyrpides N.C."/>
        </authorList>
    </citation>
    <scope>NUCLEOTIDE SEQUENCE [LARGE SCALE GENOMIC DNA]</scope>
    <source>
        <strain>H 168 / OCM 544 / DSM 9562</strain>
    </source>
</reference>
<comment type="function">
    <text evidence="1">ATP-dependent serine protease that mediates the selective degradation of mutant and abnormal proteins as well as certain short-lived regulatory proteins. Required for cellular homeostasis and for survival from DNA damage and developmental changes induced by stress. Degrades polypeptides processively to yield small peptide fragments that are 5 to 10 amino acids long. Binds to DNA in a double-stranded, site-specific manner.</text>
</comment>
<comment type="catalytic activity">
    <reaction evidence="1">
        <text>Hydrolysis of proteins in presence of ATP.</text>
        <dbReference type="EC" id="3.4.21.53"/>
    </reaction>
</comment>
<comment type="subunit">
    <text evidence="1">Homohexamer. Organized in a ring with a central cavity.</text>
</comment>
<comment type="subcellular location">
    <subcellularLocation>
        <location evidence="1">Cytoplasm</location>
    </subcellularLocation>
</comment>
<comment type="induction">
    <text evidence="1">By heat shock.</text>
</comment>
<comment type="similarity">
    <text evidence="1">Belongs to the peptidase S16 family.</text>
</comment>
<accession>B8CY71</accession>
<organism>
    <name type="scientific">Halothermothrix orenii (strain H 168 / OCM 544 / DSM 9562)</name>
    <dbReference type="NCBI Taxonomy" id="373903"/>
    <lineage>
        <taxon>Bacteria</taxon>
        <taxon>Bacillati</taxon>
        <taxon>Bacillota</taxon>
        <taxon>Clostridia</taxon>
        <taxon>Halanaerobiales</taxon>
        <taxon>Halothermotrichaceae</taxon>
        <taxon>Halothermothrix</taxon>
    </lineage>
</organism>
<evidence type="ECO:0000255" key="1">
    <source>
        <dbReference type="HAMAP-Rule" id="MF_01973"/>
    </source>
</evidence>
<evidence type="ECO:0000255" key="2">
    <source>
        <dbReference type="PROSITE-ProRule" id="PRU01122"/>
    </source>
</evidence>
<evidence type="ECO:0000255" key="3">
    <source>
        <dbReference type="PROSITE-ProRule" id="PRU01123"/>
    </source>
</evidence>
<dbReference type="EC" id="3.4.21.53" evidence="1"/>
<dbReference type="EMBL" id="CP001098">
    <property type="protein sequence ID" value="ACL70240.1"/>
    <property type="molecule type" value="Genomic_DNA"/>
</dbReference>
<dbReference type="RefSeq" id="WP_012636423.1">
    <property type="nucleotide sequence ID" value="NC_011899.1"/>
</dbReference>
<dbReference type="SMR" id="B8CY71"/>
<dbReference type="STRING" id="373903.Hore_14910"/>
<dbReference type="MEROPS" id="S16.001"/>
<dbReference type="KEGG" id="hor:Hore_14910"/>
<dbReference type="eggNOG" id="COG0466">
    <property type="taxonomic scope" value="Bacteria"/>
</dbReference>
<dbReference type="HOGENOM" id="CLU_004109_4_3_9"/>
<dbReference type="OrthoDB" id="9803599at2"/>
<dbReference type="Proteomes" id="UP000000719">
    <property type="component" value="Chromosome"/>
</dbReference>
<dbReference type="GO" id="GO:0005737">
    <property type="term" value="C:cytoplasm"/>
    <property type="evidence" value="ECO:0007669"/>
    <property type="project" value="UniProtKB-SubCell"/>
</dbReference>
<dbReference type="GO" id="GO:0005524">
    <property type="term" value="F:ATP binding"/>
    <property type="evidence" value="ECO:0007669"/>
    <property type="project" value="UniProtKB-UniRule"/>
</dbReference>
<dbReference type="GO" id="GO:0016887">
    <property type="term" value="F:ATP hydrolysis activity"/>
    <property type="evidence" value="ECO:0007669"/>
    <property type="project" value="UniProtKB-UniRule"/>
</dbReference>
<dbReference type="GO" id="GO:0004176">
    <property type="term" value="F:ATP-dependent peptidase activity"/>
    <property type="evidence" value="ECO:0007669"/>
    <property type="project" value="UniProtKB-UniRule"/>
</dbReference>
<dbReference type="GO" id="GO:0043565">
    <property type="term" value="F:sequence-specific DNA binding"/>
    <property type="evidence" value="ECO:0007669"/>
    <property type="project" value="UniProtKB-UniRule"/>
</dbReference>
<dbReference type="GO" id="GO:0004252">
    <property type="term" value="F:serine-type endopeptidase activity"/>
    <property type="evidence" value="ECO:0007669"/>
    <property type="project" value="UniProtKB-UniRule"/>
</dbReference>
<dbReference type="GO" id="GO:0034605">
    <property type="term" value="P:cellular response to heat"/>
    <property type="evidence" value="ECO:0007669"/>
    <property type="project" value="UniProtKB-UniRule"/>
</dbReference>
<dbReference type="GO" id="GO:0006515">
    <property type="term" value="P:protein quality control for misfolded or incompletely synthesized proteins"/>
    <property type="evidence" value="ECO:0007669"/>
    <property type="project" value="UniProtKB-UniRule"/>
</dbReference>
<dbReference type="CDD" id="cd19500">
    <property type="entry name" value="RecA-like_Lon"/>
    <property type="match status" value="1"/>
</dbReference>
<dbReference type="FunFam" id="3.40.50.300:FF:000382">
    <property type="entry name" value="Lon protease homolog 2, peroxisomal"/>
    <property type="match status" value="1"/>
</dbReference>
<dbReference type="Gene3D" id="1.10.8.60">
    <property type="match status" value="1"/>
</dbReference>
<dbReference type="Gene3D" id="1.20.5.5270">
    <property type="match status" value="1"/>
</dbReference>
<dbReference type="Gene3D" id="1.20.58.1480">
    <property type="match status" value="1"/>
</dbReference>
<dbReference type="Gene3D" id="3.30.230.10">
    <property type="match status" value="1"/>
</dbReference>
<dbReference type="Gene3D" id="2.30.130.40">
    <property type="entry name" value="LON domain-like"/>
    <property type="match status" value="1"/>
</dbReference>
<dbReference type="Gene3D" id="3.40.50.300">
    <property type="entry name" value="P-loop containing nucleotide triphosphate hydrolases"/>
    <property type="match status" value="1"/>
</dbReference>
<dbReference type="HAMAP" id="MF_01973">
    <property type="entry name" value="lon_bact"/>
    <property type="match status" value="1"/>
</dbReference>
<dbReference type="InterPro" id="IPR003593">
    <property type="entry name" value="AAA+_ATPase"/>
</dbReference>
<dbReference type="InterPro" id="IPR003959">
    <property type="entry name" value="ATPase_AAA_core"/>
</dbReference>
<dbReference type="InterPro" id="IPR027543">
    <property type="entry name" value="Lon_bac"/>
</dbReference>
<dbReference type="InterPro" id="IPR004815">
    <property type="entry name" value="Lon_bac/euk-typ"/>
</dbReference>
<dbReference type="InterPro" id="IPR054594">
    <property type="entry name" value="Lon_lid"/>
</dbReference>
<dbReference type="InterPro" id="IPR008269">
    <property type="entry name" value="Lon_proteolytic"/>
</dbReference>
<dbReference type="InterPro" id="IPR027065">
    <property type="entry name" value="Lon_Prtase"/>
</dbReference>
<dbReference type="InterPro" id="IPR003111">
    <property type="entry name" value="Lon_prtase_N"/>
</dbReference>
<dbReference type="InterPro" id="IPR046336">
    <property type="entry name" value="Lon_prtase_N_sf"/>
</dbReference>
<dbReference type="InterPro" id="IPR027417">
    <property type="entry name" value="P-loop_NTPase"/>
</dbReference>
<dbReference type="InterPro" id="IPR008268">
    <property type="entry name" value="Peptidase_S16_AS"/>
</dbReference>
<dbReference type="InterPro" id="IPR015947">
    <property type="entry name" value="PUA-like_sf"/>
</dbReference>
<dbReference type="InterPro" id="IPR020568">
    <property type="entry name" value="Ribosomal_Su5_D2-typ_SF"/>
</dbReference>
<dbReference type="InterPro" id="IPR014721">
    <property type="entry name" value="Ribsml_uS5_D2-typ_fold_subgr"/>
</dbReference>
<dbReference type="NCBIfam" id="TIGR00763">
    <property type="entry name" value="lon"/>
    <property type="match status" value="1"/>
</dbReference>
<dbReference type="NCBIfam" id="NF008053">
    <property type="entry name" value="PRK10787.1"/>
    <property type="match status" value="1"/>
</dbReference>
<dbReference type="PANTHER" id="PTHR10046">
    <property type="entry name" value="ATP DEPENDENT LON PROTEASE FAMILY MEMBER"/>
    <property type="match status" value="1"/>
</dbReference>
<dbReference type="Pfam" id="PF00004">
    <property type="entry name" value="AAA"/>
    <property type="match status" value="1"/>
</dbReference>
<dbReference type="Pfam" id="PF05362">
    <property type="entry name" value="Lon_C"/>
    <property type="match status" value="1"/>
</dbReference>
<dbReference type="Pfam" id="PF22667">
    <property type="entry name" value="Lon_lid"/>
    <property type="match status" value="1"/>
</dbReference>
<dbReference type="Pfam" id="PF02190">
    <property type="entry name" value="LON_substr_bdg"/>
    <property type="match status" value="1"/>
</dbReference>
<dbReference type="PIRSF" id="PIRSF001174">
    <property type="entry name" value="Lon_proteas"/>
    <property type="match status" value="1"/>
</dbReference>
<dbReference type="PRINTS" id="PR00830">
    <property type="entry name" value="ENDOLAPTASE"/>
</dbReference>
<dbReference type="SMART" id="SM00382">
    <property type="entry name" value="AAA"/>
    <property type="match status" value="1"/>
</dbReference>
<dbReference type="SMART" id="SM00464">
    <property type="entry name" value="LON"/>
    <property type="match status" value="1"/>
</dbReference>
<dbReference type="SUPFAM" id="SSF52540">
    <property type="entry name" value="P-loop containing nucleoside triphosphate hydrolases"/>
    <property type="match status" value="1"/>
</dbReference>
<dbReference type="SUPFAM" id="SSF88697">
    <property type="entry name" value="PUA domain-like"/>
    <property type="match status" value="1"/>
</dbReference>
<dbReference type="SUPFAM" id="SSF54211">
    <property type="entry name" value="Ribosomal protein S5 domain 2-like"/>
    <property type="match status" value="1"/>
</dbReference>
<dbReference type="PROSITE" id="PS51787">
    <property type="entry name" value="LON_N"/>
    <property type="match status" value="1"/>
</dbReference>
<dbReference type="PROSITE" id="PS51786">
    <property type="entry name" value="LON_PROTEOLYTIC"/>
    <property type="match status" value="1"/>
</dbReference>
<dbReference type="PROSITE" id="PS01046">
    <property type="entry name" value="LON_SER"/>
    <property type="match status" value="1"/>
</dbReference>
<gene>
    <name evidence="1" type="primary">lon</name>
    <name type="ordered locus">Hore_14910</name>
</gene>